<feature type="chain" id="PRO_0000439050" description="DNA-binding protein 7a">
    <location>
        <begin position="1"/>
        <end position="64"/>
    </location>
</feature>
<dbReference type="EMBL" id="CP001731">
    <property type="protein sequence ID" value="ADB86496.1"/>
    <property type="molecule type" value="Genomic_DNA"/>
</dbReference>
<dbReference type="SMR" id="D2PHL8"/>
<dbReference type="KEGG" id="sii:LD85_0770"/>
<dbReference type="HOGENOM" id="CLU_2929990_0_0_2"/>
<dbReference type="Proteomes" id="UP000001404">
    <property type="component" value="Chromosome"/>
</dbReference>
<dbReference type="GO" id="GO:0005737">
    <property type="term" value="C:cytoplasm"/>
    <property type="evidence" value="ECO:0007669"/>
    <property type="project" value="UniProtKB-SubCell"/>
</dbReference>
<dbReference type="GO" id="GO:0003677">
    <property type="term" value="F:DNA binding"/>
    <property type="evidence" value="ECO:0007669"/>
    <property type="project" value="UniProtKB-KW"/>
</dbReference>
<dbReference type="GO" id="GO:0004521">
    <property type="term" value="F:RNA endonuclease activity"/>
    <property type="evidence" value="ECO:0007669"/>
    <property type="project" value="InterPro"/>
</dbReference>
<dbReference type="Gene3D" id="2.40.50.40">
    <property type="match status" value="1"/>
</dbReference>
<dbReference type="InterPro" id="IPR016197">
    <property type="entry name" value="Chromo-like_dom_sf"/>
</dbReference>
<dbReference type="InterPro" id="IPR003212">
    <property type="entry name" value="DNA-bd_7a-e_arc"/>
</dbReference>
<dbReference type="NCBIfam" id="NF045555">
    <property type="entry name" value="Sul7d"/>
    <property type="match status" value="1"/>
</dbReference>
<dbReference type="Pfam" id="PF02294">
    <property type="entry name" value="7kD_DNA_binding"/>
    <property type="match status" value="1"/>
</dbReference>
<dbReference type="PIRSF" id="PIRSF036912">
    <property type="entry name" value="Sac7"/>
    <property type="match status" value="1"/>
</dbReference>
<dbReference type="SUPFAM" id="SSF54160">
    <property type="entry name" value="Chromo domain-like"/>
    <property type="match status" value="1"/>
</dbReference>
<evidence type="ECO:0000250" key="1">
    <source>
        <dbReference type="UniProtKB" id="P61990"/>
    </source>
</evidence>
<evidence type="ECO:0000269" key="2">
    <source>
    </source>
</evidence>
<evidence type="ECO:0000303" key="3">
    <source>
    </source>
</evidence>
<evidence type="ECO:0000305" key="4"/>
<evidence type="ECO:0000312" key="5">
    <source>
        <dbReference type="EMBL" id="ADB86496.1"/>
    </source>
</evidence>
<reference key="1">
    <citation type="journal article" date="2009" name="Proc. Natl. Acad. Sci. U.S.A.">
        <title>Biogeography of the Sulfolobus islandicus pan-genome.</title>
        <authorList>
            <person name="Reno M.L."/>
            <person name="Held N.L."/>
            <person name="Fields C.J."/>
            <person name="Burke P.V."/>
            <person name="Whitaker R.J."/>
        </authorList>
    </citation>
    <scope>NUCLEOTIDE SEQUENCE [LARGE SCALE GENOMIC DNA]</scope>
    <source>
        <strain>L.D.8.5 / Lassen #2</strain>
    </source>
</reference>
<reference key="2">
    <citation type="journal article" date="2016" name="Sci. Rep.">
        <title>The archaeal '7 kDa DNA-binding' proteins: extended characterization of an old gifted family.</title>
        <authorList>
            <person name="Kalichuk V."/>
            <person name="Behar G."/>
            <person name="Renodon-Corniere A."/>
            <person name="Danovski G."/>
            <person name="Obal G."/>
            <person name="Barbet J."/>
            <person name="Mouratou B."/>
            <person name="Pecorari F."/>
        </authorList>
    </citation>
    <scope>DNA-BINDING</scope>
    <scope>BIOPHYSICOCHEMICAL PROPERTIES</scope>
    <scope>SUBUNIT</scope>
    <scope>SUBCELLULAR LOCATION</scope>
    <scope>NOMENCLATURE</scope>
</reference>
<name>DN7A_SACI9</name>
<organism>
    <name type="scientific">Saccharolobus islandicus (strain L.D.8.5 / Lassen #2)</name>
    <name type="common">Sulfolobus islandicus</name>
    <dbReference type="NCBI Taxonomy" id="425944"/>
    <lineage>
        <taxon>Archaea</taxon>
        <taxon>Thermoproteota</taxon>
        <taxon>Thermoprotei</taxon>
        <taxon>Sulfolobales</taxon>
        <taxon>Sulfolobaceae</taxon>
        <taxon>Saccharolobus</taxon>
    </lineage>
</organism>
<protein>
    <recommendedName>
        <fullName evidence="4">DNA-binding protein 7a</fullName>
    </recommendedName>
    <alternativeName>
        <fullName evidence="4">7 kDa DNA-binding protein a</fullName>
    </alternativeName>
    <alternativeName>
        <fullName evidence="3">Sis7a</fullName>
    </alternativeName>
</protein>
<accession>D2PHL8</accession>
<comment type="function">
    <text evidence="1">Can constrain negative DNA supercoils. May be involved in maintaining the integrity of the genome at high temperature.</text>
</comment>
<comment type="biophysicochemical properties">
    <phDependence>
        <text evidence="2">Highly stable from pH 0 to pH 12.</text>
    </phDependence>
    <temperatureDependence>
        <text evidence="2">Hyperthermostable.</text>
    </temperatureDependence>
</comment>
<comment type="subunit">
    <text evidence="2">Monomer.</text>
</comment>
<comment type="subcellular location">
    <subcellularLocation>
        <location evidence="2">Cytoplasm</location>
    </subcellularLocation>
</comment>
<comment type="similarity">
    <text evidence="4">Belongs to the 7 kDa DNA-binding/endoribonuclease P2 family.</text>
</comment>
<sequence>MTTVKFKYKGEEKQVDISKIKKVWRVGKMISFTYDEGGGKTGRGAVSEKDAPKELLQMLEKQKK</sequence>
<proteinExistence type="evidence at protein level"/>
<keyword id="KW-0963">Cytoplasm</keyword>
<keyword id="KW-0238">DNA-binding</keyword>
<gene>
    <name evidence="5" type="ordered locus">LD85_0770</name>
</gene>